<organism>
    <name type="scientific">Nicotiana tomentosiformis</name>
    <name type="common">Tobacco</name>
    <dbReference type="NCBI Taxonomy" id="4098"/>
    <lineage>
        <taxon>Eukaryota</taxon>
        <taxon>Viridiplantae</taxon>
        <taxon>Streptophyta</taxon>
        <taxon>Embryophyta</taxon>
        <taxon>Tracheophyta</taxon>
        <taxon>Spermatophyta</taxon>
        <taxon>Magnoliopsida</taxon>
        <taxon>eudicotyledons</taxon>
        <taxon>Gunneridae</taxon>
        <taxon>Pentapetalae</taxon>
        <taxon>asterids</taxon>
        <taxon>lamiids</taxon>
        <taxon>Solanales</taxon>
        <taxon>Solanaceae</taxon>
        <taxon>Nicotianoideae</taxon>
        <taxon>Nicotianeae</taxon>
        <taxon>Nicotiana</taxon>
    </lineage>
</organism>
<reference key="1">
    <citation type="journal article" date="2006" name="Mol. Genet. Genomics">
        <title>The chloroplast genome of Nicotiana sylvestris and Nicotiana tomentosiformis: complete sequencing confirms that the Nicotiana sylvestris progenitor is the maternal genome donor of Nicotiana tabacum.</title>
        <authorList>
            <person name="Yukawa M."/>
            <person name="Tsudzuki T."/>
            <person name="Sugiura M."/>
        </authorList>
    </citation>
    <scope>NUCLEOTIDE SEQUENCE [LARGE SCALE GENOMIC DNA]</scope>
</reference>
<sequence length="123" mass="13764">MPTIKQLIRNTRQPIRNVTKSPALRGCPQRRGTCTRVYTITPKKPNSALRKVARVRLTSGFEITAYIPGIGHNLQEHSVVLVRGGRVKDLPGVRYHIVRGTLDAVGVKDRQQGRSKYGVKKPK</sequence>
<keyword id="KW-0150">Chloroplast</keyword>
<keyword id="KW-0934">Plastid</keyword>
<keyword id="KW-0687">Ribonucleoprotein</keyword>
<keyword id="KW-0689">Ribosomal protein</keyword>
<keyword id="KW-0694">RNA-binding</keyword>
<keyword id="KW-0699">rRNA-binding</keyword>
<geneLocation type="chloroplast"/>
<comment type="function">
    <text evidence="1">With S4 and S5 plays an important role in translational accuracy. Located at the interface of the 30S and 50S subunits (By similarity).</text>
</comment>
<comment type="subunit">
    <text evidence="1">Part of the 30S ribosomal subunit.</text>
</comment>
<comment type="subcellular location">
    <subcellularLocation>
        <location>Plastid</location>
        <location>Chloroplast</location>
    </subcellularLocation>
</comment>
<comment type="similarity">
    <text evidence="3">Belongs to the universal ribosomal protein uS12 family.</text>
</comment>
<evidence type="ECO:0000250" key="1"/>
<evidence type="ECO:0000255" key="2">
    <source>
        <dbReference type="HAMAP-Rule" id="MF_00403"/>
    </source>
</evidence>
<evidence type="ECO:0000305" key="3"/>
<name>RR12_NICTO</name>
<protein>
    <recommendedName>
        <fullName evidence="2">Small ribosomal subunit protein uS12cz/uS12cy</fullName>
    </recommendedName>
    <alternativeName>
        <fullName evidence="3">30S ribosomal protein S12, chloroplastic</fullName>
    </alternativeName>
</protein>
<gene>
    <name type="primary">rps12-A</name>
</gene>
<gene>
    <name type="primary">rps12-B</name>
</gene>
<dbReference type="EMBL" id="AB240139">
    <property type="protein sequence ID" value="BAE48027.1"/>
    <property type="molecule type" value="Genomic_DNA"/>
</dbReference>
<dbReference type="EMBL" id="AB240139">
    <property type="protein sequence ID" value="BAE48054.1"/>
    <property type="molecule type" value="Genomic_DNA"/>
</dbReference>
<dbReference type="SMR" id="Q33C08"/>
<dbReference type="KEGG" id="nto:3776382"/>
<dbReference type="KEGG" id="nto:3776398"/>
<dbReference type="OrthoDB" id="414309at2759"/>
<dbReference type="GO" id="GO:0009507">
    <property type="term" value="C:chloroplast"/>
    <property type="evidence" value="ECO:0007669"/>
    <property type="project" value="UniProtKB-SubCell"/>
</dbReference>
<dbReference type="GO" id="GO:0015935">
    <property type="term" value="C:small ribosomal subunit"/>
    <property type="evidence" value="ECO:0007669"/>
    <property type="project" value="InterPro"/>
</dbReference>
<dbReference type="GO" id="GO:0019843">
    <property type="term" value="F:rRNA binding"/>
    <property type="evidence" value="ECO:0007669"/>
    <property type="project" value="UniProtKB-UniRule"/>
</dbReference>
<dbReference type="GO" id="GO:0003735">
    <property type="term" value="F:structural constituent of ribosome"/>
    <property type="evidence" value="ECO:0007669"/>
    <property type="project" value="InterPro"/>
</dbReference>
<dbReference type="GO" id="GO:0006412">
    <property type="term" value="P:translation"/>
    <property type="evidence" value="ECO:0007669"/>
    <property type="project" value="UniProtKB-UniRule"/>
</dbReference>
<dbReference type="CDD" id="cd03368">
    <property type="entry name" value="Ribosomal_S12"/>
    <property type="match status" value="1"/>
</dbReference>
<dbReference type="FunFam" id="2.40.50.140:FF:000008">
    <property type="entry name" value="30S ribosomal protein S12, chloroplastic"/>
    <property type="match status" value="1"/>
</dbReference>
<dbReference type="Gene3D" id="2.40.50.140">
    <property type="entry name" value="Nucleic acid-binding proteins"/>
    <property type="match status" value="1"/>
</dbReference>
<dbReference type="HAMAP" id="MF_00403_B">
    <property type="entry name" value="Ribosomal_uS12_B"/>
    <property type="match status" value="1"/>
</dbReference>
<dbReference type="InterPro" id="IPR012340">
    <property type="entry name" value="NA-bd_OB-fold"/>
</dbReference>
<dbReference type="InterPro" id="IPR006032">
    <property type="entry name" value="Ribosomal_uS12"/>
</dbReference>
<dbReference type="InterPro" id="IPR005679">
    <property type="entry name" value="Ribosomal_uS12_bac"/>
</dbReference>
<dbReference type="NCBIfam" id="TIGR00981">
    <property type="entry name" value="rpsL_bact"/>
    <property type="match status" value="1"/>
</dbReference>
<dbReference type="PANTHER" id="PTHR11652">
    <property type="entry name" value="30S RIBOSOMAL PROTEIN S12 FAMILY MEMBER"/>
    <property type="match status" value="1"/>
</dbReference>
<dbReference type="Pfam" id="PF00164">
    <property type="entry name" value="Ribosom_S12_S23"/>
    <property type="match status" value="1"/>
</dbReference>
<dbReference type="PIRSF" id="PIRSF002133">
    <property type="entry name" value="Ribosomal_S12/S23"/>
    <property type="match status" value="1"/>
</dbReference>
<dbReference type="PRINTS" id="PR01034">
    <property type="entry name" value="RIBOSOMALS12"/>
</dbReference>
<dbReference type="SUPFAM" id="SSF50249">
    <property type="entry name" value="Nucleic acid-binding proteins"/>
    <property type="match status" value="1"/>
</dbReference>
<dbReference type="PROSITE" id="PS00055">
    <property type="entry name" value="RIBOSOMAL_S12"/>
    <property type="match status" value="1"/>
</dbReference>
<feature type="chain" id="PRO_0000276620" description="Small ribosomal subunit protein uS12cz/uS12cy">
    <location>
        <begin position="1"/>
        <end position="123"/>
    </location>
</feature>
<proteinExistence type="inferred from homology"/>
<accession>Q33C08</accession>